<evidence type="ECO:0000256" key="1">
    <source>
        <dbReference type="SAM" id="MobiDB-lite"/>
    </source>
</evidence>
<evidence type="ECO:0000269" key="2">
    <source>
    </source>
</evidence>
<evidence type="ECO:0000305" key="3"/>
<comment type="similarity">
    <text evidence="3">Belongs to the WD repeat DCAF10 family.</text>
</comment>
<comment type="sequence caution" evidence="3">
    <conflict type="frameshift">
        <sequence resource="EMBL-CDS" id="AAK93410"/>
    </conflict>
</comment>
<feature type="chain" id="PRO_0000306838" description="DDB1- and CUL4-associated factor 10 homolog">
    <location>
        <begin position="1"/>
        <end position="621"/>
    </location>
</feature>
<feature type="repeat" description="WD 1">
    <location>
        <begin position="46"/>
        <end position="85"/>
    </location>
</feature>
<feature type="repeat" description="WD 2">
    <location>
        <begin position="89"/>
        <end position="127"/>
    </location>
</feature>
<feature type="repeat" description="WD 3">
    <location>
        <begin position="131"/>
        <end position="170"/>
    </location>
</feature>
<feature type="repeat" description="WD 4">
    <location>
        <begin position="176"/>
        <end position="215"/>
    </location>
</feature>
<feature type="repeat" description="WD 5">
    <location>
        <begin position="588"/>
        <end position="621"/>
    </location>
</feature>
<feature type="region of interest" description="Disordered" evidence="1">
    <location>
        <begin position="305"/>
        <end position="349"/>
    </location>
</feature>
<feature type="region of interest" description="Disordered" evidence="1">
    <location>
        <begin position="437"/>
        <end position="483"/>
    </location>
</feature>
<feature type="compositionally biased region" description="Polar residues" evidence="1">
    <location>
        <begin position="324"/>
        <end position="342"/>
    </location>
</feature>
<feature type="compositionally biased region" description="Low complexity" evidence="1">
    <location>
        <begin position="454"/>
        <end position="478"/>
    </location>
</feature>
<feature type="modified residue" description="Phosphoserine" evidence="2">
    <location>
        <position position="307"/>
    </location>
</feature>
<feature type="modified residue" description="Phosphoserine" evidence="2">
    <location>
        <position position="494"/>
    </location>
</feature>
<feature type="modified residue" description="Phosphoserine" evidence="2">
    <location>
        <position position="497"/>
    </location>
</feature>
<feature type="sequence conflict" description="In Ref. 3; AAK93410." evidence="3" ref="3">
    <original>S</original>
    <variation>N</variation>
    <location>
        <position position="470"/>
    </location>
</feature>
<gene>
    <name type="ORF">CG1523</name>
</gene>
<reference key="1">
    <citation type="journal article" date="2000" name="Science">
        <title>The genome sequence of Drosophila melanogaster.</title>
        <authorList>
            <person name="Adams M.D."/>
            <person name="Celniker S.E."/>
            <person name="Holt R.A."/>
            <person name="Evans C.A."/>
            <person name="Gocayne J.D."/>
            <person name="Amanatides P.G."/>
            <person name="Scherer S.E."/>
            <person name="Li P.W."/>
            <person name="Hoskins R.A."/>
            <person name="Galle R.F."/>
            <person name="George R.A."/>
            <person name="Lewis S.E."/>
            <person name="Richards S."/>
            <person name="Ashburner M."/>
            <person name="Henderson S.N."/>
            <person name="Sutton G.G."/>
            <person name="Wortman J.R."/>
            <person name="Yandell M.D."/>
            <person name="Zhang Q."/>
            <person name="Chen L.X."/>
            <person name="Brandon R.C."/>
            <person name="Rogers Y.-H.C."/>
            <person name="Blazej R.G."/>
            <person name="Champe M."/>
            <person name="Pfeiffer B.D."/>
            <person name="Wan K.H."/>
            <person name="Doyle C."/>
            <person name="Baxter E.G."/>
            <person name="Helt G."/>
            <person name="Nelson C.R."/>
            <person name="Miklos G.L.G."/>
            <person name="Abril J.F."/>
            <person name="Agbayani A."/>
            <person name="An H.-J."/>
            <person name="Andrews-Pfannkoch C."/>
            <person name="Baldwin D."/>
            <person name="Ballew R.M."/>
            <person name="Basu A."/>
            <person name="Baxendale J."/>
            <person name="Bayraktaroglu L."/>
            <person name="Beasley E.M."/>
            <person name="Beeson K.Y."/>
            <person name="Benos P.V."/>
            <person name="Berman B.P."/>
            <person name="Bhandari D."/>
            <person name="Bolshakov S."/>
            <person name="Borkova D."/>
            <person name="Botchan M.R."/>
            <person name="Bouck J."/>
            <person name="Brokstein P."/>
            <person name="Brottier P."/>
            <person name="Burtis K.C."/>
            <person name="Busam D.A."/>
            <person name="Butler H."/>
            <person name="Cadieu E."/>
            <person name="Center A."/>
            <person name="Chandra I."/>
            <person name="Cherry J.M."/>
            <person name="Cawley S."/>
            <person name="Dahlke C."/>
            <person name="Davenport L.B."/>
            <person name="Davies P."/>
            <person name="de Pablos B."/>
            <person name="Delcher A."/>
            <person name="Deng Z."/>
            <person name="Mays A.D."/>
            <person name="Dew I."/>
            <person name="Dietz S.M."/>
            <person name="Dodson K."/>
            <person name="Doup L.E."/>
            <person name="Downes M."/>
            <person name="Dugan-Rocha S."/>
            <person name="Dunkov B.C."/>
            <person name="Dunn P."/>
            <person name="Durbin K.J."/>
            <person name="Evangelista C.C."/>
            <person name="Ferraz C."/>
            <person name="Ferriera S."/>
            <person name="Fleischmann W."/>
            <person name="Fosler C."/>
            <person name="Gabrielian A.E."/>
            <person name="Garg N.S."/>
            <person name="Gelbart W.M."/>
            <person name="Glasser K."/>
            <person name="Glodek A."/>
            <person name="Gong F."/>
            <person name="Gorrell J.H."/>
            <person name="Gu Z."/>
            <person name="Guan P."/>
            <person name="Harris M."/>
            <person name="Harris N.L."/>
            <person name="Harvey D.A."/>
            <person name="Heiman T.J."/>
            <person name="Hernandez J.R."/>
            <person name="Houck J."/>
            <person name="Hostin D."/>
            <person name="Houston K.A."/>
            <person name="Howland T.J."/>
            <person name="Wei M.-H."/>
            <person name="Ibegwam C."/>
            <person name="Jalali M."/>
            <person name="Kalush F."/>
            <person name="Karpen G.H."/>
            <person name="Ke Z."/>
            <person name="Kennison J.A."/>
            <person name="Ketchum K.A."/>
            <person name="Kimmel B.E."/>
            <person name="Kodira C.D."/>
            <person name="Kraft C.L."/>
            <person name="Kravitz S."/>
            <person name="Kulp D."/>
            <person name="Lai Z."/>
            <person name="Lasko P."/>
            <person name="Lei Y."/>
            <person name="Levitsky A.A."/>
            <person name="Li J.H."/>
            <person name="Li Z."/>
            <person name="Liang Y."/>
            <person name="Lin X."/>
            <person name="Liu X."/>
            <person name="Mattei B."/>
            <person name="McIntosh T.C."/>
            <person name="McLeod M.P."/>
            <person name="McPherson D."/>
            <person name="Merkulov G."/>
            <person name="Milshina N.V."/>
            <person name="Mobarry C."/>
            <person name="Morris J."/>
            <person name="Moshrefi A."/>
            <person name="Mount S.M."/>
            <person name="Moy M."/>
            <person name="Murphy B."/>
            <person name="Murphy L."/>
            <person name="Muzny D.M."/>
            <person name="Nelson D.L."/>
            <person name="Nelson D.R."/>
            <person name="Nelson K.A."/>
            <person name="Nixon K."/>
            <person name="Nusskern D.R."/>
            <person name="Pacleb J.M."/>
            <person name="Palazzolo M."/>
            <person name="Pittman G.S."/>
            <person name="Pan S."/>
            <person name="Pollard J."/>
            <person name="Puri V."/>
            <person name="Reese M.G."/>
            <person name="Reinert K."/>
            <person name="Remington K."/>
            <person name="Saunders R.D.C."/>
            <person name="Scheeler F."/>
            <person name="Shen H."/>
            <person name="Shue B.C."/>
            <person name="Siden-Kiamos I."/>
            <person name="Simpson M."/>
            <person name="Skupski M.P."/>
            <person name="Smith T.J."/>
            <person name="Spier E."/>
            <person name="Spradling A.C."/>
            <person name="Stapleton M."/>
            <person name="Strong R."/>
            <person name="Sun E."/>
            <person name="Svirskas R."/>
            <person name="Tector C."/>
            <person name="Turner R."/>
            <person name="Venter E."/>
            <person name="Wang A.H."/>
            <person name="Wang X."/>
            <person name="Wang Z.-Y."/>
            <person name="Wassarman D.A."/>
            <person name="Weinstock G.M."/>
            <person name="Weissenbach J."/>
            <person name="Williams S.M."/>
            <person name="Woodage T."/>
            <person name="Worley K.C."/>
            <person name="Wu D."/>
            <person name="Yang S."/>
            <person name="Yao Q.A."/>
            <person name="Ye J."/>
            <person name="Yeh R.-F."/>
            <person name="Zaveri J.S."/>
            <person name="Zhan M."/>
            <person name="Zhang G."/>
            <person name="Zhao Q."/>
            <person name="Zheng L."/>
            <person name="Zheng X.H."/>
            <person name="Zhong F.N."/>
            <person name="Zhong W."/>
            <person name="Zhou X."/>
            <person name="Zhu S.C."/>
            <person name="Zhu X."/>
            <person name="Smith H.O."/>
            <person name="Gibbs R.A."/>
            <person name="Myers E.W."/>
            <person name="Rubin G.M."/>
            <person name="Venter J.C."/>
        </authorList>
    </citation>
    <scope>NUCLEOTIDE SEQUENCE [LARGE SCALE GENOMIC DNA]</scope>
    <source>
        <strain>Berkeley</strain>
    </source>
</reference>
<reference key="2">
    <citation type="journal article" date="2002" name="Genome Biol.">
        <title>Annotation of the Drosophila melanogaster euchromatic genome: a systematic review.</title>
        <authorList>
            <person name="Misra S."/>
            <person name="Crosby M.A."/>
            <person name="Mungall C.J."/>
            <person name="Matthews B.B."/>
            <person name="Campbell K.S."/>
            <person name="Hradecky P."/>
            <person name="Huang Y."/>
            <person name="Kaminker J.S."/>
            <person name="Millburn G.H."/>
            <person name="Prochnik S.E."/>
            <person name="Smith C.D."/>
            <person name="Tupy J.L."/>
            <person name="Whitfield E.J."/>
            <person name="Bayraktaroglu L."/>
            <person name="Berman B.P."/>
            <person name="Bettencourt B.R."/>
            <person name="Celniker S.E."/>
            <person name="de Grey A.D.N.J."/>
            <person name="Drysdale R.A."/>
            <person name="Harris N.L."/>
            <person name="Richter J."/>
            <person name="Russo S."/>
            <person name="Schroeder A.J."/>
            <person name="Shu S.Q."/>
            <person name="Stapleton M."/>
            <person name="Yamada C."/>
            <person name="Ashburner M."/>
            <person name="Gelbart W.M."/>
            <person name="Rubin G.M."/>
            <person name="Lewis S.E."/>
        </authorList>
    </citation>
    <scope>GENOME REANNOTATION</scope>
    <source>
        <strain>Berkeley</strain>
    </source>
</reference>
<reference key="3">
    <citation type="journal article" date="2002" name="Genome Biol.">
        <title>A Drosophila full-length cDNA resource.</title>
        <authorList>
            <person name="Stapleton M."/>
            <person name="Carlson J.W."/>
            <person name="Brokstein P."/>
            <person name="Yu C."/>
            <person name="Champe M."/>
            <person name="George R.A."/>
            <person name="Guarin H."/>
            <person name="Kronmiller B."/>
            <person name="Pacleb J.M."/>
            <person name="Park S."/>
            <person name="Wan K.H."/>
            <person name="Rubin G.M."/>
            <person name="Celniker S.E."/>
        </authorList>
    </citation>
    <scope>NUCLEOTIDE SEQUENCE [LARGE SCALE MRNA]</scope>
    <source>
        <strain>Berkeley</strain>
        <tissue>Embryo</tissue>
    </source>
</reference>
<reference key="4">
    <citation type="journal article" date="2008" name="J. Proteome Res.">
        <title>Phosphoproteome analysis of Drosophila melanogaster embryos.</title>
        <authorList>
            <person name="Zhai B."/>
            <person name="Villen J."/>
            <person name="Beausoleil S.A."/>
            <person name="Mintseris J."/>
            <person name="Gygi S.P."/>
        </authorList>
    </citation>
    <scope>PHOSPHORYLATION [LARGE SCALE ANALYSIS] AT SER-307; SER-494 AND SER-497</scope>
    <scope>IDENTIFICATION BY MASS SPECTROMETRY</scope>
    <source>
        <tissue>Embryo</tissue>
    </source>
</reference>
<organism>
    <name type="scientific">Drosophila melanogaster</name>
    <name type="common">Fruit fly</name>
    <dbReference type="NCBI Taxonomy" id="7227"/>
    <lineage>
        <taxon>Eukaryota</taxon>
        <taxon>Metazoa</taxon>
        <taxon>Ecdysozoa</taxon>
        <taxon>Arthropoda</taxon>
        <taxon>Hexapoda</taxon>
        <taxon>Insecta</taxon>
        <taxon>Pterygota</taxon>
        <taxon>Neoptera</taxon>
        <taxon>Endopterygota</taxon>
        <taxon>Diptera</taxon>
        <taxon>Brachycera</taxon>
        <taxon>Muscomorpha</taxon>
        <taxon>Ephydroidea</taxon>
        <taxon>Drosophilidae</taxon>
        <taxon>Drosophila</taxon>
        <taxon>Sophophora</taxon>
    </lineage>
</organism>
<proteinExistence type="evidence at protein level"/>
<dbReference type="EMBL" id="AE014297">
    <property type="protein sequence ID" value="AAF56817.1"/>
    <property type="molecule type" value="Genomic_DNA"/>
</dbReference>
<dbReference type="EMBL" id="AY051986">
    <property type="protein sequence ID" value="AAK93410.1"/>
    <property type="status" value="ALT_FRAME"/>
    <property type="molecule type" value="mRNA"/>
</dbReference>
<dbReference type="RefSeq" id="NP_651635.2">
    <property type="nucleotide sequence ID" value="NM_143378.4"/>
</dbReference>
<dbReference type="SMR" id="Q9VAT2"/>
<dbReference type="BioGRID" id="68276">
    <property type="interactions" value="3"/>
</dbReference>
<dbReference type="FunCoup" id="Q9VAT2">
    <property type="interactions" value="553"/>
</dbReference>
<dbReference type="IntAct" id="Q9VAT2">
    <property type="interactions" value="3"/>
</dbReference>
<dbReference type="STRING" id="7227.FBpp0084724"/>
<dbReference type="GlyGen" id="Q9VAT2">
    <property type="glycosylation" value="1 site"/>
</dbReference>
<dbReference type="iPTMnet" id="Q9VAT2"/>
<dbReference type="PaxDb" id="7227-FBpp0084724"/>
<dbReference type="EnsemblMetazoa" id="FBtr0085355">
    <property type="protein sequence ID" value="FBpp0084724"/>
    <property type="gene ID" value="FBgn0039601"/>
</dbReference>
<dbReference type="GeneID" id="43400"/>
<dbReference type="KEGG" id="dme:Dmel_CG1523"/>
<dbReference type="UCSC" id="CG1523-RA">
    <property type="organism name" value="d. melanogaster"/>
</dbReference>
<dbReference type="AGR" id="FB:FBgn0039601"/>
<dbReference type="FlyBase" id="FBgn0039601">
    <property type="gene designation" value="CG1523"/>
</dbReference>
<dbReference type="VEuPathDB" id="VectorBase:FBgn0039601"/>
<dbReference type="eggNOG" id="KOG4155">
    <property type="taxonomic scope" value="Eukaryota"/>
</dbReference>
<dbReference type="GeneTree" id="ENSGT00390000012666"/>
<dbReference type="HOGENOM" id="CLU_028919_1_0_1"/>
<dbReference type="InParanoid" id="Q9VAT2"/>
<dbReference type="OMA" id="IVWHQPV"/>
<dbReference type="OrthoDB" id="20669at2759"/>
<dbReference type="PhylomeDB" id="Q9VAT2"/>
<dbReference type="Reactome" id="R-DME-8951664">
    <property type="pathway name" value="Neddylation"/>
</dbReference>
<dbReference type="BioGRID-ORCS" id="43400">
    <property type="hits" value="0 hits in 1 CRISPR screen"/>
</dbReference>
<dbReference type="ChiTaRS" id="CG1523">
    <property type="organism name" value="fly"/>
</dbReference>
<dbReference type="GenomeRNAi" id="43400"/>
<dbReference type="PRO" id="PR:Q9VAT2"/>
<dbReference type="Proteomes" id="UP000000803">
    <property type="component" value="Chromosome 3R"/>
</dbReference>
<dbReference type="Bgee" id="FBgn0039601">
    <property type="expression patterns" value="Expressed in eye disc (Drosophila) and 67 other cell types or tissues"/>
</dbReference>
<dbReference type="GO" id="GO:0080008">
    <property type="term" value="C:Cul4-RING E3 ubiquitin ligase complex"/>
    <property type="evidence" value="ECO:0000318"/>
    <property type="project" value="GO_Central"/>
</dbReference>
<dbReference type="FunFam" id="2.130.10.10:FF:000661">
    <property type="entry name" value="Uncharacterized protein, isoform A"/>
    <property type="match status" value="1"/>
</dbReference>
<dbReference type="Gene3D" id="2.130.10.10">
    <property type="entry name" value="YVTN repeat-like/Quinoprotein amine dehydrogenase"/>
    <property type="match status" value="2"/>
</dbReference>
<dbReference type="InterPro" id="IPR039085">
    <property type="entry name" value="DCA10"/>
</dbReference>
<dbReference type="InterPro" id="IPR015943">
    <property type="entry name" value="WD40/YVTN_repeat-like_dom_sf"/>
</dbReference>
<dbReference type="InterPro" id="IPR019775">
    <property type="entry name" value="WD40_repeat_CS"/>
</dbReference>
<dbReference type="InterPro" id="IPR036322">
    <property type="entry name" value="WD40_repeat_dom_sf"/>
</dbReference>
<dbReference type="InterPro" id="IPR001680">
    <property type="entry name" value="WD40_rpt"/>
</dbReference>
<dbReference type="PANTHER" id="PTHR14588">
    <property type="entry name" value="DDB1- AND CUL4-ASSOCIATED FACTOR 10"/>
    <property type="match status" value="1"/>
</dbReference>
<dbReference type="PANTHER" id="PTHR14588:SF2">
    <property type="entry name" value="DDB1- AND CUL4-ASSOCIATED FACTOR 10"/>
    <property type="match status" value="1"/>
</dbReference>
<dbReference type="Pfam" id="PF00400">
    <property type="entry name" value="WD40"/>
    <property type="match status" value="3"/>
</dbReference>
<dbReference type="SMART" id="SM00320">
    <property type="entry name" value="WD40"/>
    <property type="match status" value="5"/>
</dbReference>
<dbReference type="SUPFAM" id="SSF50978">
    <property type="entry name" value="WD40 repeat-like"/>
    <property type="match status" value="1"/>
</dbReference>
<dbReference type="PROSITE" id="PS00678">
    <property type="entry name" value="WD_REPEATS_1"/>
    <property type="match status" value="1"/>
</dbReference>
<dbReference type="PROSITE" id="PS50082">
    <property type="entry name" value="WD_REPEATS_2"/>
    <property type="match status" value="2"/>
</dbReference>
<dbReference type="PROSITE" id="PS50294">
    <property type="entry name" value="WD_REPEATS_REGION"/>
    <property type="match status" value="1"/>
</dbReference>
<accession>Q9VAT2</accession>
<accession>Q960M2</accession>
<keyword id="KW-0597">Phosphoprotein</keyword>
<keyword id="KW-1185">Reference proteome</keyword>
<keyword id="KW-0677">Repeat</keyword>
<keyword id="KW-0853">WD repeat</keyword>
<protein>
    <recommendedName>
        <fullName>DDB1- and CUL4-associated factor 10 homolog</fullName>
    </recommendedName>
    <alternativeName>
        <fullName>WD repeat-containing protein 32 homolog</fullName>
    </alternativeName>
</protein>
<name>DCA10_DROME</name>
<sequence>MERYLSRRESGFHIHRSDDNSLMRRIYSSMNMFNSYHANCWPTDAGRTGAIFNLEFNADGNVVVAATERKCVLVFDAITQKEIFKVPDAHTDSVNCIKFFDERLFATGSDDFTVALWDLRNMKQKLRVLHGHSNWVKNIEYSSKDKLLVSSGFDGSIFTWDINSQTEQGLISQRVFHASGLMRCRISPTGDKLVLCTSGGYIMIIHHLDLTTLHKDLCGFRPGIYRLMQLGEQYIPQAAKYDHVFSKRQKKNRVELVTDFPENNDAEMIMALQIHPHCCCMLTRNVSCDEQSEWTCIHDINEEPVRSEDEQDEVEPQPKRKRVSTTLASRSSLNESQDQDTVGLTPRQARRPLRVSSVQVFQLDNSGAGRGASDNPSVLTRSDSFIPDIWAAEVTVQERAIRQNRARVSNNHVSGYNFVYAISSGVLPLRQLGANSLMGSSTSPRPLTTPPPTESNQSSSSSSSSSSSSSSSSSSNNSDTTVRLEIGNRLRLRSFNSPVTTPTFKENGHSILVNAKKLLYYAAETNTKPGFIKEPGFSADGRVVCSPYGNGVRLFGYSEDCCDYPKCQAFEEVKSKPRKLVELAKITEHQDVVLCAKFSPREPLLVTGCNGGEVTWYRPNL</sequence>